<protein>
    <recommendedName>
        <fullName>Oxygen regulatory protein NreC</fullName>
    </recommendedName>
    <alternativeName>
        <fullName>Nitrogen regulation protein C</fullName>
    </alternativeName>
</protein>
<feature type="chain" id="PRO_0000349347" description="Oxygen regulatory protein NreC">
    <location>
        <begin position="1"/>
        <end position="217"/>
    </location>
</feature>
<feature type="domain" description="Response regulatory" evidence="2">
    <location>
        <begin position="2"/>
        <end position="119"/>
    </location>
</feature>
<feature type="domain" description="HTH luxR-type" evidence="3">
    <location>
        <begin position="148"/>
        <end position="213"/>
    </location>
</feature>
<feature type="DNA-binding region" description="H-T-H motif" evidence="3">
    <location>
        <begin position="172"/>
        <end position="191"/>
    </location>
</feature>
<feature type="modified residue" description="4-aspartylphosphate" evidence="2">
    <location>
        <position position="53"/>
    </location>
</feature>
<evidence type="ECO:0000250" key="1"/>
<evidence type="ECO:0000255" key="2">
    <source>
        <dbReference type="PROSITE-ProRule" id="PRU00169"/>
    </source>
</evidence>
<evidence type="ECO:0000255" key="3">
    <source>
        <dbReference type="PROSITE-ProRule" id="PRU00411"/>
    </source>
</evidence>
<evidence type="ECO:0000305" key="4"/>
<name>NREC_STAAS</name>
<proteinExistence type="inferred from homology"/>
<dbReference type="EMBL" id="BX571857">
    <property type="protein sequence ID" value="CAG44095.1"/>
    <property type="molecule type" value="Genomic_DNA"/>
</dbReference>
<dbReference type="RefSeq" id="WP_000706315.1">
    <property type="nucleotide sequence ID" value="NC_002953.3"/>
</dbReference>
<dbReference type="SMR" id="Q6G6T0"/>
<dbReference type="KEGG" id="sas:SAS2282"/>
<dbReference type="HOGENOM" id="CLU_000445_90_1_9"/>
<dbReference type="GO" id="GO:0005737">
    <property type="term" value="C:cytoplasm"/>
    <property type="evidence" value="ECO:0007669"/>
    <property type="project" value="UniProtKB-SubCell"/>
</dbReference>
<dbReference type="GO" id="GO:0003677">
    <property type="term" value="F:DNA binding"/>
    <property type="evidence" value="ECO:0007669"/>
    <property type="project" value="UniProtKB-KW"/>
</dbReference>
<dbReference type="GO" id="GO:0000160">
    <property type="term" value="P:phosphorelay signal transduction system"/>
    <property type="evidence" value="ECO:0007669"/>
    <property type="project" value="UniProtKB-KW"/>
</dbReference>
<dbReference type="GO" id="GO:0006355">
    <property type="term" value="P:regulation of DNA-templated transcription"/>
    <property type="evidence" value="ECO:0007669"/>
    <property type="project" value="InterPro"/>
</dbReference>
<dbReference type="CDD" id="cd06170">
    <property type="entry name" value="LuxR_C_like"/>
    <property type="match status" value="1"/>
</dbReference>
<dbReference type="CDD" id="cd17535">
    <property type="entry name" value="REC_NarL-like"/>
    <property type="match status" value="1"/>
</dbReference>
<dbReference type="Gene3D" id="3.40.50.2300">
    <property type="match status" value="1"/>
</dbReference>
<dbReference type="InterPro" id="IPR011006">
    <property type="entry name" value="CheY-like_superfamily"/>
</dbReference>
<dbReference type="InterPro" id="IPR016032">
    <property type="entry name" value="Sig_transdc_resp-reg_C-effctor"/>
</dbReference>
<dbReference type="InterPro" id="IPR001789">
    <property type="entry name" value="Sig_transdc_resp-reg_receiver"/>
</dbReference>
<dbReference type="InterPro" id="IPR000792">
    <property type="entry name" value="Tscrpt_reg_LuxR_C"/>
</dbReference>
<dbReference type="InterPro" id="IPR039420">
    <property type="entry name" value="WalR-like"/>
</dbReference>
<dbReference type="PANTHER" id="PTHR43214:SF37">
    <property type="entry name" value="TRANSCRIPTIONAL REGULATORY PROTEIN YDFI"/>
    <property type="match status" value="1"/>
</dbReference>
<dbReference type="PANTHER" id="PTHR43214">
    <property type="entry name" value="TWO-COMPONENT RESPONSE REGULATOR"/>
    <property type="match status" value="1"/>
</dbReference>
<dbReference type="Pfam" id="PF00196">
    <property type="entry name" value="GerE"/>
    <property type="match status" value="1"/>
</dbReference>
<dbReference type="Pfam" id="PF00072">
    <property type="entry name" value="Response_reg"/>
    <property type="match status" value="1"/>
</dbReference>
<dbReference type="PRINTS" id="PR00038">
    <property type="entry name" value="HTHLUXR"/>
</dbReference>
<dbReference type="SMART" id="SM00421">
    <property type="entry name" value="HTH_LUXR"/>
    <property type="match status" value="1"/>
</dbReference>
<dbReference type="SMART" id="SM00448">
    <property type="entry name" value="REC"/>
    <property type="match status" value="1"/>
</dbReference>
<dbReference type="SUPFAM" id="SSF46894">
    <property type="entry name" value="C-terminal effector domain of the bipartite response regulators"/>
    <property type="match status" value="1"/>
</dbReference>
<dbReference type="SUPFAM" id="SSF52172">
    <property type="entry name" value="CheY-like"/>
    <property type="match status" value="1"/>
</dbReference>
<dbReference type="PROSITE" id="PS00622">
    <property type="entry name" value="HTH_LUXR_1"/>
    <property type="match status" value="1"/>
</dbReference>
<dbReference type="PROSITE" id="PS50043">
    <property type="entry name" value="HTH_LUXR_2"/>
    <property type="match status" value="1"/>
</dbReference>
<dbReference type="PROSITE" id="PS50110">
    <property type="entry name" value="RESPONSE_REGULATORY"/>
    <property type="match status" value="1"/>
</dbReference>
<organism>
    <name type="scientific">Staphylococcus aureus (strain MSSA476)</name>
    <dbReference type="NCBI Taxonomy" id="282459"/>
    <lineage>
        <taxon>Bacteria</taxon>
        <taxon>Bacillati</taxon>
        <taxon>Bacillota</taxon>
        <taxon>Bacilli</taxon>
        <taxon>Bacillales</taxon>
        <taxon>Staphylococcaceae</taxon>
        <taxon>Staphylococcus</taxon>
    </lineage>
</organism>
<comment type="function">
    <text evidence="1">Member of the two-component regulatory system NreB/NreC involved in the control of dissimilatory nitrate/nitrite reduction in response to oxygen. Phosphorylated NreC binds to a GC-rich palindromic sequence at the promoters of the nitrate (narGHJI) and nitrite (nir) reductase operons, as well as the putative nitrate transporter gene narT, and activates their expression (By similarity).</text>
</comment>
<comment type="subcellular location">
    <subcellularLocation>
        <location evidence="4">Cytoplasm</location>
    </subcellularLocation>
</comment>
<comment type="PTM">
    <text evidence="1">Phosphorylated by NreB.</text>
</comment>
<keyword id="KW-0010">Activator</keyword>
<keyword id="KW-0963">Cytoplasm</keyword>
<keyword id="KW-0238">DNA-binding</keyword>
<keyword id="KW-0597">Phosphoprotein</keyword>
<keyword id="KW-0804">Transcription</keyword>
<keyword id="KW-0805">Transcription regulation</keyword>
<keyword id="KW-0902">Two-component regulatory system</keyword>
<accession>Q6G6T0</accession>
<sequence>MKIVIADDHAVVRTGFSMILNYQNDMEVVATAADGVEAYQKVMEYKPDVLLMDLSMPPGESGLIATSKIADSFPETKILILTMFDDEEYLFHVLRNGAKGYILKNAPDEQLLLAIRTVYKGETYVDMKLTTSLVNEFVSNSNQDTANTTDPFKILSKRELEILPLIAKGYGNKEIAEKLFVSVKTVEAHKTHIMTKLGLKSKPELVEYALKKKLLEF</sequence>
<reference key="1">
    <citation type="journal article" date="2004" name="Proc. Natl. Acad. Sci. U.S.A.">
        <title>Complete genomes of two clinical Staphylococcus aureus strains: evidence for the rapid evolution of virulence and drug resistance.</title>
        <authorList>
            <person name="Holden M.T.G."/>
            <person name="Feil E.J."/>
            <person name="Lindsay J.A."/>
            <person name="Peacock S.J."/>
            <person name="Day N.P.J."/>
            <person name="Enright M.C."/>
            <person name="Foster T.J."/>
            <person name="Moore C.E."/>
            <person name="Hurst L."/>
            <person name="Atkin R."/>
            <person name="Barron A."/>
            <person name="Bason N."/>
            <person name="Bentley S.D."/>
            <person name="Chillingworth C."/>
            <person name="Chillingworth T."/>
            <person name="Churcher C."/>
            <person name="Clark L."/>
            <person name="Corton C."/>
            <person name="Cronin A."/>
            <person name="Doggett J."/>
            <person name="Dowd L."/>
            <person name="Feltwell T."/>
            <person name="Hance Z."/>
            <person name="Harris B."/>
            <person name="Hauser H."/>
            <person name="Holroyd S."/>
            <person name="Jagels K."/>
            <person name="James K.D."/>
            <person name="Lennard N."/>
            <person name="Line A."/>
            <person name="Mayes R."/>
            <person name="Moule S."/>
            <person name="Mungall K."/>
            <person name="Ormond D."/>
            <person name="Quail M.A."/>
            <person name="Rabbinowitsch E."/>
            <person name="Rutherford K.M."/>
            <person name="Sanders M."/>
            <person name="Sharp S."/>
            <person name="Simmonds M."/>
            <person name="Stevens K."/>
            <person name="Whitehead S."/>
            <person name="Barrell B.G."/>
            <person name="Spratt B.G."/>
            <person name="Parkhill J."/>
        </authorList>
    </citation>
    <scope>NUCLEOTIDE SEQUENCE [LARGE SCALE GENOMIC DNA]</scope>
    <source>
        <strain>MSSA476</strain>
    </source>
</reference>
<gene>
    <name type="primary">nreC</name>
    <name type="ordered locus">SAS2282</name>
</gene>